<sequence length="100" mass="11057">MKISEEEVRHVAALSKLSFSESETIEFATTLSKIVDMVELLNEVDTTGVAITTTMADKKNIMRADIAETGVDRKFLFQNVPEKENHFIKVPAILDDGGDA</sequence>
<comment type="function">
    <text evidence="1">Allows the formation of correctly charged Asn-tRNA(Asn) or Gln-tRNA(Gln) through the transamidation of misacylated Asp-tRNA(Asn) or Glu-tRNA(Gln) in organisms which lack either or both of asparaginyl-tRNA or glutaminyl-tRNA synthetases. The reaction takes place in the presence of glutamine and ATP through an activated phospho-Asp-tRNA(Asn) or phospho-Glu-tRNA(Gln).</text>
</comment>
<comment type="catalytic activity">
    <reaction evidence="1">
        <text>L-glutamyl-tRNA(Gln) + L-glutamine + ATP + H2O = L-glutaminyl-tRNA(Gln) + L-glutamate + ADP + phosphate + H(+)</text>
        <dbReference type="Rhea" id="RHEA:17521"/>
        <dbReference type="Rhea" id="RHEA-COMP:9681"/>
        <dbReference type="Rhea" id="RHEA-COMP:9684"/>
        <dbReference type="ChEBI" id="CHEBI:15377"/>
        <dbReference type="ChEBI" id="CHEBI:15378"/>
        <dbReference type="ChEBI" id="CHEBI:29985"/>
        <dbReference type="ChEBI" id="CHEBI:30616"/>
        <dbReference type="ChEBI" id="CHEBI:43474"/>
        <dbReference type="ChEBI" id="CHEBI:58359"/>
        <dbReference type="ChEBI" id="CHEBI:78520"/>
        <dbReference type="ChEBI" id="CHEBI:78521"/>
        <dbReference type="ChEBI" id="CHEBI:456216"/>
    </reaction>
</comment>
<comment type="catalytic activity">
    <reaction evidence="1">
        <text>L-aspartyl-tRNA(Asn) + L-glutamine + ATP + H2O = L-asparaginyl-tRNA(Asn) + L-glutamate + ADP + phosphate + 2 H(+)</text>
        <dbReference type="Rhea" id="RHEA:14513"/>
        <dbReference type="Rhea" id="RHEA-COMP:9674"/>
        <dbReference type="Rhea" id="RHEA-COMP:9677"/>
        <dbReference type="ChEBI" id="CHEBI:15377"/>
        <dbReference type="ChEBI" id="CHEBI:15378"/>
        <dbReference type="ChEBI" id="CHEBI:29985"/>
        <dbReference type="ChEBI" id="CHEBI:30616"/>
        <dbReference type="ChEBI" id="CHEBI:43474"/>
        <dbReference type="ChEBI" id="CHEBI:58359"/>
        <dbReference type="ChEBI" id="CHEBI:78515"/>
        <dbReference type="ChEBI" id="CHEBI:78516"/>
        <dbReference type="ChEBI" id="CHEBI:456216"/>
    </reaction>
</comment>
<comment type="subunit">
    <text evidence="1">Heterotrimer of A, B and C subunits.</text>
</comment>
<comment type="similarity">
    <text evidence="1">Belongs to the GatC family.</text>
</comment>
<protein>
    <recommendedName>
        <fullName evidence="1">Aspartyl/glutamyl-tRNA(Asn/Gln) amidotransferase subunit C</fullName>
        <shortName evidence="1">Asp/Glu-ADT subunit C</shortName>
        <ecNumber evidence="1">6.3.5.-</ecNumber>
    </recommendedName>
</protein>
<gene>
    <name evidence="1" type="primary">gatC</name>
    <name type="ordered locus">SZO_15900</name>
</gene>
<feature type="chain" id="PRO_1000203079" description="Aspartyl/glutamyl-tRNA(Asn/Gln) amidotransferase subunit C">
    <location>
        <begin position="1"/>
        <end position="100"/>
    </location>
</feature>
<reference key="1">
    <citation type="journal article" date="2009" name="PLoS Pathog.">
        <title>Genomic evidence for the evolution of Streptococcus equi: host restriction, increased virulence, and genetic exchange with human pathogens.</title>
        <authorList>
            <person name="Holden M.T.G."/>
            <person name="Heather Z."/>
            <person name="Paillot R."/>
            <person name="Steward K.F."/>
            <person name="Webb K."/>
            <person name="Ainslie F."/>
            <person name="Jourdan T."/>
            <person name="Bason N.C."/>
            <person name="Holroyd N.E."/>
            <person name="Mungall K."/>
            <person name="Quail M.A."/>
            <person name="Sanders M."/>
            <person name="Simmonds M."/>
            <person name="Willey D."/>
            <person name="Brooks K."/>
            <person name="Aanensen D.M."/>
            <person name="Spratt B.G."/>
            <person name="Jolley K.A."/>
            <person name="Maiden M.C.J."/>
            <person name="Kehoe M."/>
            <person name="Chanter N."/>
            <person name="Bentley S.D."/>
            <person name="Robinson C."/>
            <person name="Maskell D.J."/>
            <person name="Parkhill J."/>
            <person name="Waller A.S."/>
        </authorList>
    </citation>
    <scope>NUCLEOTIDE SEQUENCE [LARGE SCALE GENOMIC DNA]</scope>
    <source>
        <strain>H70</strain>
    </source>
</reference>
<keyword id="KW-0067">ATP-binding</keyword>
<keyword id="KW-0436">Ligase</keyword>
<keyword id="KW-0547">Nucleotide-binding</keyword>
<keyword id="KW-0648">Protein biosynthesis</keyword>
<dbReference type="EC" id="6.3.5.-" evidence="1"/>
<dbReference type="EMBL" id="FM204884">
    <property type="protein sequence ID" value="CAX00310.1"/>
    <property type="molecule type" value="Genomic_DNA"/>
</dbReference>
<dbReference type="SMR" id="C0ME98"/>
<dbReference type="KEGG" id="seq:SZO_15900"/>
<dbReference type="eggNOG" id="COG0721">
    <property type="taxonomic scope" value="Bacteria"/>
</dbReference>
<dbReference type="HOGENOM" id="CLU_105899_1_2_9"/>
<dbReference type="Proteomes" id="UP000001368">
    <property type="component" value="Chromosome"/>
</dbReference>
<dbReference type="GO" id="GO:0050566">
    <property type="term" value="F:asparaginyl-tRNA synthase (glutamine-hydrolyzing) activity"/>
    <property type="evidence" value="ECO:0007669"/>
    <property type="project" value="RHEA"/>
</dbReference>
<dbReference type="GO" id="GO:0005524">
    <property type="term" value="F:ATP binding"/>
    <property type="evidence" value="ECO:0007669"/>
    <property type="project" value="UniProtKB-KW"/>
</dbReference>
<dbReference type="GO" id="GO:0050567">
    <property type="term" value="F:glutaminyl-tRNA synthase (glutamine-hydrolyzing) activity"/>
    <property type="evidence" value="ECO:0007669"/>
    <property type="project" value="UniProtKB-UniRule"/>
</dbReference>
<dbReference type="GO" id="GO:0070681">
    <property type="term" value="P:glutaminyl-tRNAGln biosynthesis via transamidation"/>
    <property type="evidence" value="ECO:0007669"/>
    <property type="project" value="TreeGrafter"/>
</dbReference>
<dbReference type="GO" id="GO:0006450">
    <property type="term" value="P:regulation of translational fidelity"/>
    <property type="evidence" value="ECO:0007669"/>
    <property type="project" value="InterPro"/>
</dbReference>
<dbReference type="GO" id="GO:0006412">
    <property type="term" value="P:translation"/>
    <property type="evidence" value="ECO:0007669"/>
    <property type="project" value="UniProtKB-UniRule"/>
</dbReference>
<dbReference type="Gene3D" id="1.10.20.60">
    <property type="entry name" value="Glu-tRNAGln amidotransferase C subunit, N-terminal domain"/>
    <property type="match status" value="1"/>
</dbReference>
<dbReference type="HAMAP" id="MF_00122">
    <property type="entry name" value="GatC"/>
    <property type="match status" value="1"/>
</dbReference>
<dbReference type="InterPro" id="IPR036113">
    <property type="entry name" value="Asp/Glu-ADT_sf_sub_c"/>
</dbReference>
<dbReference type="InterPro" id="IPR003837">
    <property type="entry name" value="GatC"/>
</dbReference>
<dbReference type="NCBIfam" id="TIGR00135">
    <property type="entry name" value="gatC"/>
    <property type="match status" value="1"/>
</dbReference>
<dbReference type="PANTHER" id="PTHR15004">
    <property type="entry name" value="GLUTAMYL-TRNA(GLN) AMIDOTRANSFERASE SUBUNIT C, MITOCHONDRIAL"/>
    <property type="match status" value="1"/>
</dbReference>
<dbReference type="PANTHER" id="PTHR15004:SF0">
    <property type="entry name" value="GLUTAMYL-TRNA(GLN) AMIDOTRANSFERASE SUBUNIT C, MITOCHONDRIAL"/>
    <property type="match status" value="1"/>
</dbReference>
<dbReference type="Pfam" id="PF02686">
    <property type="entry name" value="GatC"/>
    <property type="match status" value="1"/>
</dbReference>
<dbReference type="SUPFAM" id="SSF141000">
    <property type="entry name" value="Glu-tRNAGln amidotransferase C subunit"/>
    <property type="match status" value="1"/>
</dbReference>
<organism>
    <name type="scientific">Streptococcus equi subsp. zooepidemicus (strain H70)</name>
    <dbReference type="NCBI Taxonomy" id="553483"/>
    <lineage>
        <taxon>Bacteria</taxon>
        <taxon>Bacillati</taxon>
        <taxon>Bacillota</taxon>
        <taxon>Bacilli</taxon>
        <taxon>Lactobacillales</taxon>
        <taxon>Streptococcaceae</taxon>
        <taxon>Streptococcus</taxon>
    </lineage>
</organism>
<evidence type="ECO:0000255" key="1">
    <source>
        <dbReference type="HAMAP-Rule" id="MF_00122"/>
    </source>
</evidence>
<name>GATC_STRS7</name>
<accession>C0ME98</accession>
<proteinExistence type="inferred from homology"/>